<sequence>MHPGRTTGKGPSTHTQIDQQPPRLLIVHIALPSWADICTNLCEALQNFFSLACSLMGPSRMSLFSLYMVQDQHECILPFVQVKGNFARLQTCISELRMLQREGCFRSQGASLRLAVEDGLQQFKQYSRHVTTRAALTYTSLEITILTSQPGKEVVKQLEEGLKDTDLARVRRFQVVEVTKGILEHVDSASPVEDTSNDESSILGTDIDLQTIDNDIVSMEIFFKAWLHNSGTDQEQIHLLLSSQCFSNISRPRDNPMCLKCDLQERLLCPSLLAGTADGSLRMDDPKGDFITLYQMASQSSASHYKLQVIKALKSSGLCESLTYGLPFILRPTSCWQLDWDELETNQQHFHALCHSLLKREWLLLAKGEPPGPGHSQRIPASTFYVIMPSHSLTLLVKAVATRELMLPSTFPLLPEDPHDDSLKNVESMLDSLELEPTYNPLHVQSHLYSHLSSIYAKPQGRLHPHWESRAPRKHPCKTGQLQTNRARATVAPLPMTPVPGRASKMPAASKSSSDAFFLPSEWEKDPSRP</sequence>
<feature type="chain" id="PRO_0000349268" description="Meiosis 1 arrest protein">
    <location>
        <begin position="1"/>
        <end position="530"/>
    </location>
</feature>
<feature type="region of interest" description="Disordered" evidence="2">
    <location>
        <begin position="463"/>
        <end position="530"/>
    </location>
</feature>
<feature type="compositionally biased region" description="Low complexity" evidence="2">
    <location>
        <begin position="503"/>
        <end position="516"/>
    </location>
</feature>
<feature type="splice variant" id="VSP_035291" description="In isoform 3." evidence="5">
    <location>
        <begin position="1"/>
        <end position="282"/>
    </location>
</feature>
<feature type="splice variant" id="VSP_035292" description="In isoform 3." evidence="5">
    <location>
        <begin position="359"/>
        <end position="427"/>
    </location>
</feature>
<feature type="splice variant" id="VSP_035293" description="In isoform 2." evidence="6">
    <original>KREWLLL</original>
    <variation>VSTHVPR</variation>
    <location>
        <begin position="359"/>
        <end position="365"/>
    </location>
</feature>
<feature type="splice variant" id="VSP_035294" description="In isoform 2." evidence="6">
    <location>
        <begin position="366"/>
        <end position="530"/>
    </location>
</feature>
<feature type="splice variant" id="VSP_055677" description="In isoform 4." evidence="5">
    <location>
        <begin position="474"/>
        <end position="477"/>
    </location>
</feature>
<feature type="sequence variant" id="VAR_046335" description="In dbSNP:rs3025980.">
    <original>R</original>
    <variation>Q</variation>
    <location>
        <position position="5"/>
    </location>
</feature>
<feature type="sequence variant" id="VAR_085687" description="In SPGF48; uncertain significance." evidence="4">
    <original>S</original>
    <variation>P</variation>
    <location>
        <position position="50"/>
    </location>
</feature>
<feature type="sequence variant" id="VAR_046336" description="In dbSNP:rs7602159.">
    <original>T</original>
    <variation>P</variation>
    <location>
        <position position="195"/>
    </location>
</feature>
<feature type="sequence variant" id="VAR_085688" description="In SPGF48; uncertain significance." evidence="4">
    <original>R</original>
    <variation>Q</variation>
    <location>
        <position position="266"/>
    </location>
</feature>
<feature type="sequence variant" id="VAR_085689" description="In SPGF48; uncertain significance." evidence="4">
    <original>G</original>
    <variation>R</variation>
    <location>
        <position position="317"/>
    </location>
</feature>
<feature type="sequence variant" id="VAR_085690" description="In SPGF48; uncertain significance." evidence="4">
    <original>P</original>
    <variation>L</variation>
    <location>
        <position position="389"/>
    </location>
</feature>
<feature type="sequence variant" id="VAR_085691" description="In SPGF48; uncertain significance." evidence="4">
    <original>L</original>
    <variation>P</variation>
    <location>
        <position position="430"/>
    </location>
</feature>
<feature type="sequence conflict" description="In Ref. 1; BAH13233." evidence="7" ref="1">
    <original>K</original>
    <variation>E</variation>
    <location>
        <position position="359"/>
    </location>
</feature>
<organism>
    <name type="scientific">Homo sapiens</name>
    <name type="common">Human</name>
    <dbReference type="NCBI Taxonomy" id="9606"/>
    <lineage>
        <taxon>Eukaryota</taxon>
        <taxon>Metazoa</taxon>
        <taxon>Chordata</taxon>
        <taxon>Craniata</taxon>
        <taxon>Vertebrata</taxon>
        <taxon>Euteleostomi</taxon>
        <taxon>Mammalia</taxon>
        <taxon>Eutheria</taxon>
        <taxon>Euarchontoglires</taxon>
        <taxon>Primates</taxon>
        <taxon>Haplorrhini</taxon>
        <taxon>Catarrhini</taxon>
        <taxon>Hominidae</taxon>
        <taxon>Homo</taxon>
    </lineage>
</organism>
<gene>
    <name type="primary">M1AP</name>
    <name type="synonym">C2orf65</name>
    <name type="synonym">SPATA37</name>
</gene>
<keyword id="KW-0025">Alternative splicing</keyword>
<keyword id="KW-0963">Cytoplasm</keyword>
<keyword id="KW-0221">Differentiation</keyword>
<keyword id="KW-0225">Disease variant</keyword>
<keyword id="KW-1267">Proteomics identification</keyword>
<keyword id="KW-1185">Reference proteome</keyword>
<keyword id="KW-0744">Spermatogenesis</keyword>
<proteinExistence type="evidence at protein level"/>
<accession>Q8TC57</accession>
<accession>B7Z6E7</accession>
<accession>E9PGG8</accession>
<accession>Q6ZP30</accession>
<accession>Q96L07</accession>
<protein>
    <recommendedName>
        <fullName>Meiosis 1 arrest protein</fullName>
    </recommendedName>
    <alternativeName>
        <fullName>Meiosis 1-arresting protein</fullName>
    </alternativeName>
    <alternativeName>
        <fullName>Meiosis 1-associated protein</fullName>
    </alternativeName>
    <alternativeName>
        <fullName>Spermatogenesis-associated protein 37</fullName>
    </alternativeName>
</protein>
<reference key="1">
    <citation type="journal article" date="2004" name="Nat. Genet.">
        <title>Complete sequencing and characterization of 21,243 full-length human cDNAs.</title>
        <authorList>
            <person name="Ota T."/>
            <person name="Suzuki Y."/>
            <person name="Nishikawa T."/>
            <person name="Otsuki T."/>
            <person name="Sugiyama T."/>
            <person name="Irie R."/>
            <person name="Wakamatsu A."/>
            <person name="Hayashi K."/>
            <person name="Sato H."/>
            <person name="Nagai K."/>
            <person name="Kimura K."/>
            <person name="Makita H."/>
            <person name="Sekine M."/>
            <person name="Obayashi M."/>
            <person name="Nishi T."/>
            <person name="Shibahara T."/>
            <person name="Tanaka T."/>
            <person name="Ishii S."/>
            <person name="Yamamoto J."/>
            <person name="Saito K."/>
            <person name="Kawai Y."/>
            <person name="Isono Y."/>
            <person name="Nakamura Y."/>
            <person name="Nagahari K."/>
            <person name="Murakami K."/>
            <person name="Yasuda T."/>
            <person name="Iwayanagi T."/>
            <person name="Wagatsuma M."/>
            <person name="Shiratori A."/>
            <person name="Sudo H."/>
            <person name="Hosoiri T."/>
            <person name="Kaku Y."/>
            <person name="Kodaira H."/>
            <person name="Kondo H."/>
            <person name="Sugawara M."/>
            <person name="Takahashi M."/>
            <person name="Kanda K."/>
            <person name="Yokoi T."/>
            <person name="Furuya T."/>
            <person name="Kikkawa E."/>
            <person name="Omura Y."/>
            <person name="Abe K."/>
            <person name="Kamihara K."/>
            <person name="Katsuta N."/>
            <person name="Sato K."/>
            <person name="Tanikawa M."/>
            <person name="Yamazaki M."/>
            <person name="Ninomiya K."/>
            <person name="Ishibashi T."/>
            <person name="Yamashita H."/>
            <person name="Murakawa K."/>
            <person name="Fujimori K."/>
            <person name="Tanai H."/>
            <person name="Kimata M."/>
            <person name="Watanabe M."/>
            <person name="Hiraoka S."/>
            <person name="Chiba Y."/>
            <person name="Ishida S."/>
            <person name="Ono Y."/>
            <person name="Takiguchi S."/>
            <person name="Watanabe S."/>
            <person name="Yosida M."/>
            <person name="Hotuta T."/>
            <person name="Kusano J."/>
            <person name="Kanehori K."/>
            <person name="Takahashi-Fujii A."/>
            <person name="Hara H."/>
            <person name="Tanase T.-O."/>
            <person name="Nomura Y."/>
            <person name="Togiya S."/>
            <person name="Komai F."/>
            <person name="Hara R."/>
            <person name="Takeuchi K."/>
            <person name="Arita M."/>
            <person name="Imose N."/>
            <person name="Musashino K."/>
            <person name="Yuuki H."/>
            <person name="Oshima A."/>
            <person name="Sasaki N."/>
            <person name="Aotsuka S."/>
            <person name="Yoshikawa Y."/>
            <person name="Matsunawa H."/>
            <person name="Ichihara T."/>
            <person name="Shiohata N."/>
            <person name="Sano S."/>
            <person name="Moriya S."/>
            <person name="Momiyama H."/>
            <person name="Satoh N."/>
            <person name="Takami S."/>
            <person name="Terashima Y."/>
            <person name="Suzuki O."/>
            <person name="Nakagawa S."/>
            <person name="Senoh A."/>
            <person name="Mizoguchi H."/>
            <person name="Goto Y."/>
            <person name="Shimizu F."/>
            <person name="Wakebe H."/>
            <person name="Hishigaki H."/>
            <person name="Watanabe T."/>
            <person name="Sugiyama A."/>
            <person name="Takemoto M."/>
            <person name="Kawakami B."/>
            <person name="Yamazaki M."/>
            <person name="Watanabe K."/>
            <person name="Kumagai A."/>
            <person name="Itakura S."/>
            <person name="Fukuzumi Y."/>
            <person name="Fujimori Y."/>
            <person name="Komiyama M."/>
            <person name="Tashiro H."/>
            <person name="Tanigami A."/>
            <person name="Fujiwara T."/>
            <person name="Ono T."/>
            <person name="Yamada K."/>
            <person name="Fujii Y."/>
            <person name="Ozaki K."/>
            <person name="Hirao M."/>
            <person name="Ohmori Y."/>
            <person name="Kawabata A."/>
            <person name="Hikiji T."/>
            <person name="Kobatake N."/>
            <person name="Inagaki H."/>
            <person name="Ikema Y."/>
            <person name="Okamoto S."/>
            <person name="Okitani R."/>
            <person name="Kawakami T."/>
            <person name="Noguchi S."/>
            <person name="Itoh T."/>
            <person name="Shigeta K."/>
            <person name="Senba T."/>
            <person name="Matsumura K."/>
            <person name="Nakajima Y."/>
            <person name="Mizuno T."/>
            <person name="Morinaga M."/>
            <person name="Sasaki M."/>
            <person name="Togashi T."/>
            <person name="Oyama M."/>
            <person name="Hata H."/>
            <person name="Watanabe M."/>
            <person name="Komatsu T."/>
            <person name="Mizushima-Sugano J."/>
            <person name="Satoh T."/>
            <person name="Shirai Y."/>
            <person name="Takahashi Y."/>
            <person name="Nakagawa K."/>
            <person name="Okumura K."/>
            <person name="Nagase T."/>
            <person name="Nomura N."/>
            <person name="Kikuchi H."/>
            <person name="Masuho Y."/>
            <person name="Yamashita R."/>
            <person name="Nakai K."/>
            <person name="Yada T."/>
            <person name="Nakamura Y."/>
            <person name="Ohara O."/>
            <person name="Isogai T."/>
            <person name="Sugano S."/>
        </authorList>
    </citation>
    <scope>NUCLEOTIDE SEQUENCE [LARGE SCALE MRNA] (ISOFORMS 3 AND 4)</scope>
    <source>
        <tissue>Macrophage</tissue>
    </source>
</reference>
<reference key="2">
    <citation type="journal article" date="2005" name="Nature">
        <title>Generation and annotation of the DNA sequences of human chromosomes 2 and 4.</title>
        <authorList>
            <person name="Hillier L.W."/>
            <person name="Graves T.A."/>
            <person name="Fulton R.S."/>
            <person name="Fulton L.A."/>
            <person name="Pepin K.H."/>
            <person name="Minx P."/>
            <person name="Wagner-McPherson C."/>
            <person name="Layman D."/>
            <person name="Wylie K."/>
            <person name="Sekhon M."/>
            <person name="Becker M.C."/>
            <person name="Fewell G.A."/>
            <person name="Delehaunty K.D."/>
            <person name="Miner T.L."/>
            <person name="Nash W.E."/>
            <person name="Kremitzki C."/>
            <person name="Oddy L."/>
            <person name="Du H."/>
            <person name="Sun H."/>
            <person name="Bradshaw-Cordum H."/>
            <person name="Ali J."/>
            <person name="Carter J."/>
            <person name="Cordes M."/>
            <person name="Harris A."/>
            <person name="Isak A."/>
            <person name="van Brunt A."/>
            <person name="Nguyen C."/>
            <person name="Du F."/>
            <person name="Courtney L."/>
            <person name="Kalicki J."/>
            <person name="Ozersky P."/>
            <person name="Abbott S."/>
            <person name="Armstrong J."/>
            <person name="Belter E.A."/>
            <person name="Caruso L."/>
            <person name="Cedroni M."/>
            <person name="Cotton M."/>
            <person name="Davidson T."/>
            <person name="Desai A."/>
            <person name="Elliott G."/>
            <person name="Erb T."/>
            <person name="Fronick C."/>
            <person name="Gaige T."/>
            <person name="Haakenson W."/>
            <person name="Haglund K."/>
            <person name="Holmes A."/>
            <person name="Harkins R."/>
            <person name="Kim K."/>
            <person name="Kruchowski S.S."/>
            <person name="Strong C.M."/>
            <person name="Grewal N."/>
            <person name="Goyea E."/>
            <person name="Hou S."/>
            <person name="Levy A."/>
            <person name="Martinka S."/>
            <person name="Mead K."/>
            <person name="McLellan M.D."/>
            <person name="Meyer R."/>
            <person name="Randall-Maher J."/>
            <person name="Tomlinson C."/>
            <person name="Dauphin-Kohlberg S."/>
            <person name="Kozlowicz-Reilly A."/>
            <person name="Shah N."/>
            <person name="Swearengen-Shahid S."/>
            <person name="Snider J."/>
            <person name="Strong J.T."/>
            <person name="Thompson J."/>
            <person name="Yoakum M."/>
            <person name="Leonard S."/>
            <person name="Pearman C."/>
            <person name="Trani L."/>
            <person name="Radionenko M."/>
            <person name="Waligorski J.E."/>
            <person name="Wang C."/>
            <person name="Rock S.M."/>
            <person name="Tin-Wollam A.-M."/>
            <person name="Maupin R."/>
            <person name="Latreille P."/>
            <person name="Wendl M.C."/>
            <person name="Yang S.-P."/>
            <person name="Pohl C."/>
            <person name="Wallis J.W."/>
            <person name="Spieth J."/>
            <person name="Bieri T.A."/>
            <person name="Berkowicz N."/>
            <person name="Nelson J.O."/>
            <person name="Osborne J."/>
            <person name="Ding L."/>
            <person name="Meyer R."/>
            <person name="Sabo A."/>
            <person name="Shotland Y."/>
            <person name="Sinha P."/>
            <person name="Wohldmann P.E."/>
            <person name="Cook L.L."/>
            <person name="Hickenbotham M.T."/>
            <person name="Eldred J."/>
            <person name="Williams D."/>
            <person name="Jones T.A."/>
            <person name="She X."/>
            <person name="Ciccarelli F.D."/>
            <person name="Izaurralde E."/>
            <person name="Taylor J."/>
            <person name="Schmutz J."/>
            <person name="Myers R.M."/>
            <person name="Cox D.R."/>
            <person name="Huang X."/>
            <person name="McPherson J.D."/>
            <person name="Mardis E.R."/>
            <person name="Clifton S.W."/>
            <person name="Warren W.C."/>
            <person name="Chinwalla A.T."/>
            <person name="Eddy S.R."/>
            <person name="Marra M.A."/>
            <person name="Ovcharenko I."/>
            <person name="Furey T.S."/>
            <person name="Miller W."/>
            <person name="Eichler E.E."/>
            <person name="Bork P."/>
            <person name="Suyama M."/>
            <person name="Torrents D."/>
            <person name="Waterston R.H."/>
            <person name="Wilson R.K."/>
        </authorList>
    </citation>
    <scope>NUCLEOTIDE SEQUENCE [LARGE SCALE GENOMIC DNA]</scope>
</reference>
<reference key="3">
    <citation type="submission" date="2005-09" db="EMBL/GenBank/DDBJ databases">
        <authorList>
            <person name="Mural R.J."/>
            <person name="Istrail S."/>
            <person name="Sutton G.G."/>
            <person name="Florea L."/>
            <person name="Halpern A.L."/>
            <person name="Mobarry C.M."/>
            <person name="Lippert R."/>
            <person name="Walenz B."/>
            <person name="Shatkay H."/>
            <person name="Dew I."/>
            <person name="Miller J.R."/>
            <person name="Flanigan M.J."/>
            <person name="Edwards N.J."/>
            <person name="Bolanos R."/>
            <person name="Fasulo D."/>
            <person name="Halldorsson B.V."/>
            <person name="Hannenhalli S."/>
            <person name="Turner R."/>
            <person name="Yooseph S."/>
            <person name="Lu F."/>
            <person name="Nusskern D.R."/>
            <person name="Shue B.C."/>
            <person name="Zheng X.H."/>
            <person name="Zhong F."/>
            <person name="Delcher A.L."/>
            <person name="Huson D.H."/>
            <person name="Kravitz S.A."/>
            <person name="Mouchard L."/>
            <person name="Reinert K."/>
            <person name="Remington K.A."/>
            <person name="Clark A.G."/>
            <person name="Waterman M.S."/>
            <person name="Eichler E.E."/>
            <person name="Adams M.D."/>
            <person name="Hunkapiller M.W."/>
            <person name="Myers E.W."/>
            <person name="Venter J.C."/>
        </authorList>
    </citation>
    <scope>NUCLEOTIDE SEQUENCE [LARGE SCALE GENOMIC DNA]</scope>
</reference>
<reference key="4">
    <citation type="journal article" date="2004" name="Genome Res.">
        <title>The status, quality, and expansion of the NIH full-length cDNA project: the Mammalian Gene Collection (MGC).</title>
        <authorList>
            <consortium name="The MGC Project Team"/>
        </authorList>
    </citation>
    <scope>NUCLEOTIDE SEQUENCE [LARGE SCALE MRNA] (ISOFORMS 1 AND 2)</scope>
    <source>
        <tissue>Testis</tissue>
    </source>
</reference>
<reference key="5">
    <citation type="journal article" date="2020" name="Am. J. Hum. Genet.">
        <title>Bi-allelic Mutations in M1AP Are a Frequent Cause of Meiotic Arrest and Severely Impaired Spermatogenesis Leading to Male Infertility.</title>
        <authorList>
            <consortium name="GEMINI Consortium"/>
            <person name="Wyrwoll M.J."/>
            <person name="Temel S.G."/>
            <person name="Nagirnaja L."/>
            <person name="Oud M.S."/>
            <person name="Lopes A.M."/>
            <person name="van der Heijden G.W."/>
            <person name="Heald J.S."/>
            <person name="Rotte N."/>
            <person name="Wistuba J."/>
            <person name="Woeste M."/>
            <person name="Ledig S."/>
            <person name="Krenz H."/>
            <person name="Smits R.M."/>
            <person name="Carvalho F."/>
            <person name="Goncalves J."/>
            <person name="Fietz D."/>
            <person name="Tuerkgenc B."/>
            <person name="Ergoeren M.C."/>
            <person name="Cetinkaya M."/>
            <person name="Basar M."/>
            <person name="Kahraman S."/>
            <person name="McEleny K."/>
            <person name="Xavier M.J."/>
            <person name="Turner H."/>
            <person name="Pilatz A."/>
            <person name="Roepke A."/>
            <person name="Dugas M."/>
            <person name="Kliesch S."/>
            <person name="Neuhaus N."/>
            <person name="Aston K.I."/>
            <person name="Conrad D.F."/>
            <person name="Veltman J.A."/>
            <person name="Friedrich C."/>
            <person name="Tuettelmann F."/>
        </authorList>
    </citation>
    <scope>VARIANTS SPGF48 PRO-50; GLN-266; ARG-317; LEU-389 AND PRO-430</scope>
    <scope>FUNCTION</scope>
</reference>
<reference key="6">
    <citation type="journal article" date="2020" name="Clin. Genet.">
        <title>An M1AP homozygous splice-site mutation associated with severe oligozoospermia in a consanguineous family.</title>
        <authorList>
            <person name="Tu C."/>
            <person name="Wang Y."/>
            <person name="Nie H."/>
            <person name="Meng L."/>
            <person name="Wang W."/>
            <person name="Li Y."/>
            <person name="Li D."/>
            <person name="Zhang H."/>
            <person name="Lu G."/>
            <person name="Lin G."/>
            <person name="Tan Y.Q."/>
            <person name="Du J."/>
        </authorList>
    </citation>
    <scope>INVOLVEMENT IN SPGF48</scope>
</reference>
<comment type="function">
    <text evidence="4">Required for meiosis I progression during spermatogenesis.</text>
</comment>
<comment type="interaction">
    <interactant intactId="EBI-748182">
        <id>Q8TC57</id>
    </interactant>
    <interactant intactId="EBI-742750">
        <id>Q8TBE0</id>
        <label>BAHD1</label>
    </interactant>
    <organismsDiffer>false</organismsDiffer>
    <experiments>3</experiments>
</comment>
<comment type="interaction">
    <interactant intactId="EBI-748182">
        <id>Q8TC57</id>
    </interactant>
    <interactant intactId="EBI-748171">
        <id>O43186</id>
        <label>CRX</label>
    </interactant>
    <organismsDiffer>false</organismsDiffer>
    <experiments>4</experiments>
</comment>
<comment type="interaction">
    <interactant intactId="EBI-748182">
        <id>Q8TC57</id>
    </interactant>
    <interactant intactId="EBI-5453285">
        <id>Q2TBE0</id>
        <label>CWF19L2</label>
    </interactant>
    <organismsDiffer>false</organismsDiffer>
    <experiments>3</experiments>
</comment>
<comment type="interaction">
    <interactant intactId="EBI-748182">
        <id>Q8TC57</id>
    </interactant>
    <interactant intactId="EBI-1055572">
        <id>P17661</id>
        <label>DES</label>
    </interactant>
    <organismsDiffer>false</organismsDiffer>
    <experiments>3</experiments>
</comment>
<comment type="interaction">
    <interactant intactId="EBI-748182">
        <id>Q8TC57</id>
    </interactant>
    <interactant intactId="EBI-5916454">
        <id>A6NEM1</id>
        <label>GOLGA6L9</label>
    </interactant>
    <organismsDiffer>false</organismsDiffer>
    <experiments>3</experiments>
</comment>
<comment type="interaction">
    <interactant intactId="EBI-748182">
        <id>Q8TC57</id>
    </interactant>
    <interactant intactId="EBI-968218">
        <id>P20700</id>
        <label>LMNB1</label>
    </interactant>
    <organismsDiffer>false</organismsDiffer>
    <experiments>3</experiments>
</comment>
<comment type="interaction">
    <interactant intactId="EBI-748182">
        <id>Q8TC57</id>
    </interactant>
    <interactant intactId="EBI-748182">
        <id>Q8TC57</id>
        <label>M1AP</label>
    </interactant>
    <organismsDiffer>false</organismsDiffer>
    <experiments>4</experiments>
</comment>
<comment type="interaction">
    <interactant intactId="EBI-748182">
        <id>Q8TC57</id>
    </interactant>
    <interactant intactId="EBI-740446">
        <id>P32242</id>
        <label>OTX1</label>
    </interactant>
    <organismsDiffer>false</organismsDiffer>
    <experiments>3</experiments>
</comment>
<comment type="interaction">
    <interactant intactId="EBI-748182">
        <id>Q8TC57</id>
    </interactant>
    <interactant intactId="EBI-9087860">
        <id>P32243-2</id>
        <label>OTX2</label>
    </interactant>
    <organismsDiffer>false</organismsDiffer>
    <experiments>3</experiments>
</comment>
<comment type="interaction">
    <interactant intactId="EBI-748182">
        <id>Q8TC57</id>
    </interactant>
    <interactant intactId="EBI-4401947">
        <id>Q9HB19</id>
        <label>PLEKHA2</label>
    </interactant>
    <organismsDiffer>false</organismsDiffer>
    <experiments>6</experiments>
</comment>
<comment type="interaction">
    <interactant intactId="EBI-748182">
        <id>Q8TC57</id>
    </interactant>
    <interactant intactId="EBI-2855862">
        <id>Q9BT43</id>
        <label>POLR3GL</label>
    </interactant>
    <organismsDiffer>false</organismsDiffer>
    <experiments>3</experiments>
</comment>
<comment type="interaction">
    <interactant intactId="EBI-748182">
        <id>Q8TC57</id>
    </interactant>
    <interactant intactId="EBI-11522811">
        <id>Q8IUQ4-2</id>
        <label>SIAH1</label>
    </interactant>
    <organismsDiffer>false</organismsDiffer>
    <experiments>3</experiments>
</comment>
<comment type="interaction">
    <interactant intactId="EBI-748182">
        <id>Q8TC57</id>
    </interactant>
    <interactant intactId="EBI-358993">
        <id>Q15645</id>
        <label>TRIP13</label>
    </interactant>
    <organismsDiffer>false</organismsDiffer>
    <experiments>3</experiments>
</comment>
<comment type="interaction">
    <interactant intactId="EBI-748182">
        <id>Q8TC57</id>
    </interactant>
    <interactant intactId="EBI-12876508">
        <id>O95164</id>
        <label>UBL3</label>
    </interactant>
    <organismsDiffer>false</organismsDiffer>
    <experiments>3</experiments>
</comment>
<comment type="interaction">
    <interactant intactId="EBI-748182">
        <id>Q8TC57</id>
    </interactant>
    <interactant intactId="EBI-2602428">
        <id>Q8NDX6</id>
        <label>ZNF740</label>
    </interactant>
    <organismsDiffer>false</organismsDiffer>
    <experiments>3</experiments>
</comment>
<comment type="subcellular location">
    <subcellularLocation>
        <location evidence="1">Cytoplasm</location>
    </subcellularLocation>
</comment>
<comment type="alternative products">
    <event type="alternative splicing"/>
    <isoform>
        <id>Q8TC57-1</id>
        <name>1</name>
        <sequence type="displayed"/>
    </isoform>
    <isoform>
        <id>Q8TC57-2</id>
        <name>2</name>
        <sequence type="described" ref="VSP_035293 VSP_035294"/>
    </isoform>
    <isoform>
        <id>Q8TC57-3</id>
        <name>3</name>
        <sequence type="described" ref="VSP_035291 VSP_035292"/>
    </isoform>
    <isoform>
        <id>Q8TC57-4</id>
        <name>4</name>
        <sequence type="described" ref="VSP_055677"/>
    </isoform>
</comment>
<comment type="disease" evidence="3 4">
    <disease id="DI-05968">
        <name>Spermatogenic failure 48</name>
        <acronym>SPGF48</acronym>
        <description>An autosomal recessive infertility disorder caused by spermatogenesis defects resulting in non-obstructive azoospermia.</description>
        <dbReference type="MIM" id="619108"/>
    </disease>
    <text>The disease may be caused by variants affecting the gene represented in this entry.</text>
</comment>
<name>M1AP_HUMAN</name>
<dbReference type="EMBL" id="AK130161">
    <property type="protein sequence ID" value="BAC85295.1"/>
    <property type="molecule type" value="mRNA"/>
</dbReference>
<dbReference type="EMBL" id="AK300188">
    <property type="protein sequence ID" value="BAH13233.1"/>
    <property type="molecule type" value="mRNA"/>
</dbReference>
<dbReference type="EMBL" id="AC005033">
    <property type="protein sequence ID" value="AAX93225.1"/>
    <property type="molecule type" value="Genomic_DNA"/>
</dbReference>
<dbReference type="EMBL" id="AC007387">
    <property type="status" value="NOT_ANNOTATED_CDS"/>
    <property type="molecule type" value="Genomic_DNA"/>
</dbReference>
<dbReference type="EMBL" id="CH471053">
    <property type="protein sequence ID" value="EAW99611.1"/>
    <property type="molecule type" value="Genomic_DNA"/>
</dbReference>
<dbReference type="EMBL" id="BC014602">
    <property type="protein sequence ID" value="AAH14602.1"/>
    <property type="molecule type" value="mRNA"/>
</dbReference>
<dbReference type="EMBL" id="BC025997">
    <property type="protein sequence ID" value="AAH25997.1"/>
    <property type="molecule type" value="mRNA"/>
</dbReference>
<dbReference type="CCDS" id="CCDS33229.1">
    <molecule id="Q8TC57-1"/>
</dbReference>
<dbReference type="CCDS" id="CCDS62941.1">
    <molecule id="Q8TC57-4"/>
</dbReference>
<dbReference type="RefSeq" id="NP_001268224.1">
    <molecule id="Q8TC57-2"/>
    <property type="nucleotide sequence ID" value="NM_001281295.2"/>
</dbReference>
<dbReference type="RefSeq" id="NP_001268225.1">
    <molecule id="Q8TC57-4"/>
    <property type="nucleotide sequence ID" value="NM_001281296.2"/>
</dbReference>
<dbReference type="RefSeq" id="NP_001308668.1">
    <molecule id="Q8TC57-1"/>
    <property type="nucleotide sequence ID" value="NM_001321739.2"/>
</dbReference>
<dbReference type="RefSeq" id="NP_620159.2">
    <molecule id="Q8TC57-1"/>
    <property type="nucleotide sequence ID" value="NM_138804.4"/>
</dbReference>
<dbReference type="RefSeq" id="XP_011530852.1">
    <molecule id="Q8TC57-1"/>
    <property type="nucleotide sequence ID" value="XM_011532550.3"/>
</dbReference>
<dbReference type="RefSeq" id="XP_011530853.1">
    <molecule id="Q8TC57-1"/>
    <property type="nucleotide sequence ID" value="XM_011532551.3"/>
</dbReference>
<dbReference type="RefSeq" id="XP_054196584.1">
    <molecule id="Q8TC57-1"/>
    <property type="nucleotide sequence ID" value="XM_054340609.1"/>
</dbReference>
<dbReference type="RefSeq" id="XP_054196585.1">
    <molecule id="Q8TC57-1"/>
    <property type="nucleotide sequence ID" value="XM_054340610.1"/>
</dbReference>
<dbReference type="BioGRID" id="126265">
    <property type="interactions" value="24"/>
</dbReference>
<dbReference type="FunCoup" id="Q8TC57">
    <property type="interactions" value="251"/>
</dbReference>
<dbReference type="IntAct" id="Q8TC57">
    <property type="interactions" value="18"/>
</dbReference>
<dbReference type="STRING" id="9606.ENSP00000290536"/>
<dbReference type="iPTMnet" id="Q8TC57"/>
<dbReference type="PhosphoSitePlus" id="Q8TC57"/>
<dbReference type="BioMuta" id="M1AP"/>
<dbReference type="DMDM" id="74730556"/>
<dbReference type="MassIVE" id="Q8TC57"/>
<dbReference type="PaxDb" id="9606-ENSP00000290536"/>
<dbReference type="PeptideAtlas" id="Q8TC57"/>
<dbReference type="ProteomicsDB" id="20319"/>
<dbReference type="ProteomicsDB" id="74090">
    <molecule id="Q8TC57-1"/>
</dbReference>
<dbReference type="ProteomicsDB" id="74091">
    <molecule id="Q8TC57-2"/>
</dbReference>
<dbReference type="ProteomicsDB" id="74092">
    <molecule id="Q8TC57-3"/>
</dbReference>
<dbReference type="Antibodypedia" id="49889">
    <property type="antibodies" value="35 antibodies from 13 providers"/>
</dbReference>
<dbReference type="DNASU" id="130951"/>
<dbReference type="Ensembl" id="ENST00000290536.9">
    <molecule id="Q8TC57-1"/>
    <property type="protein sequence ID" value="ENSP00000290536.5"/>
    <property type="gene ID" value="ENSG00000159374.18"/>
</dbReference>
<dbReference type="Ensembl" id="ENST00000409585.5">
    <molecule id="Q8TC57-4"/>
    <property type="protein sequence ID" value="ENSP00000386793.1"/>
    <property type="gene ID" value="ENSG00000159374.18"/>
</dbReference>
<dbReference type="Ensembl" id="ENST00000421985.2">
    <molecule id="Q8TC57-1"/>
    <property type="protein sequence ID" value="ENSP00000414882.2"/>
    <property type="gene ID" value="ENSG00000159374.18"/>
</dbReference>
<dbReference type="Ensembl" id="ENST00000536235.5">
    <molecule id="Q8TC57-4"/>
    <property type="protein sequence ID" value="ENSP00000445662.1"/>
    <property type="gene ID" value="ENSG00000159374.18"/>
</dbReference>
<dbReference type="GeneID" id="130951"/>
<dbReference type="KEGG" id="hsa:130951"/>
<dbReference type="MANE-Select" id="ENST00000421985.2">
    <property type="protein sequence ID" value="ENSP00000414882.2"/>
    <property type="RefSeq nucleotide sequence ID" value="NM_001321739.2"/>
    <property type="RefSeq protein sequence ID" value="NP_001308668.1"/>
</dbReference>
<dbReference type="UCSC" id="uc002smy.3">
    <molecule id="Q8TC57-1"/>
    <property type="organism name" value="human"/>
</dbReference>
<dbReference type="AGR" id="HGNC:25183"/>
<dbReference type="CTD" id="130951"/>
<dbReference type="DisGeNET" id="130951"/>
<dbReference type="GeneCards" id="M1AP"/>
<dbReference type="HGNC" id="HGNC:25183">
    <property type="gene designation" value="M1AP"/>
</dbReference>
<dbReference type="HPA" id="ENSG00000159374">
    <property type="expression patterns" value="Tissue enhanced (testis)"/>
</dbReference>
<dbReference type="MalaCards" id="M1AP"/>
<dbReference type="MIM" id="619098">
    <property type="type" value="gene"/>
</dbReference>
<dbReference type="MIM" id="619108">
    <property type="type" value="phenotype"/>
</dbReference>
<dbReference type="neXtProt" id="NX_Q8TC57"/>
<dbReference type="OpenTargets" id="ENSG00000159374"/>
<dbReference type="PharmGKB" id="PA162379401"/>
<dbReference type="VEuPathDB" id="HostDB:ENSG00000159374"/>
<dbReference type="eggNOG" id="ENOG502QT91">
    <property type="taxonomic scope" value="Eukaryota"/>
</dbReference>
<dbReference type="GeneTree" id="ENSGT00390000005656"/>
<dbReference type="HOGENOM" id="CLU_038694_0_0_1"/>
<dbReference type="InParanoid" id="Q8TC57"/>
<dbReference type="OMA" id="LRKHPCK"/>
<dbReference type="OrthoDB" id="6433824at2759"/>
<dbReference type="PAN-GO" id="Q8TC57">
    <property type="GO annotations" value="2 GO annotations based on evolutionary models"/>
</dbReference>
<dbReference type="PhylomeDB" id="Q8TC57"/>
<dbReference type="TreeFam" id="TF329502"/>
<dbReference type="PathwayCommons" id="Q8TC57"/>
<dbReference type="SignaLink" id="Q8TC57"/>
<dbReference type="BioGRID-ORCS" id="130951">
    <property type="hits" value="19 hits in 1150 CRISPR screens"/>
</dbReference>
<dbReference type="GenomeRNAi" id="130951"/>
<dbReference type="Pharos" id="Q8TC57">
    <property type="development level" value="Tdark"/>
</dbReference>
<dbReference type="PRO" id="PR:Q8TC57"/>
<dbReference type="Proteomes" id="UP000005640">
    <property type="component" value="Chromosome 2"/>
</dbReference>
<dbReference type="RNAct" id="Q8TC57">
    <property type="molecule type" value="protein"/>
</dbReference>
<dbReference type="Bgee" id="ENSG00000159374">
    <property type="expression patterns" value="Expressed in primordial germ cell in gonad and 95 other cell types or tissues"/>
</dbReference>
<dbReference type="ExpressionAtlas" id="Q8TC57">
    <property type="expression patterns" value="baseline and differential"/>
</dbReference>
<dbReference type="GO" id="GO:0005737">
    <property type="term" value="C:cytoplasm"/>
    <property type="evidence" value="ECO:0000250"/>
    <property type="project" value="UniProtKB"/>
</dbReference>
<dbReference type="GO" id="GO:0016020">
    <property type="term" value="C:membrane"/>
    <property type="evidence" value="ECO:0000303"/>
    <property type="project" value="UniProtKB"/>
</dbReference>
<dbReference type="GO" id="GO:0042802">
    <property type="term" value="F:identical protein binding"/>
    <property type="evidence" value="ECO:0000353"/>
    <property type="project" value="IntAct"/>
</dbReference>
<dbReference type="GO" id="GO:0030154">
    <property type="term" value="P:cell differentiation"/>
    <property type="evidence" value="ECO:0007669"/>
    <property type="project" value="UniProtKB-KW"/>
</dbReference>
<dbReference type="GO" id="GO:0006325">
    <property type="term" value="P:chromatin organization"/>
    <property type="evidence" value="ECO:0000303"/>
    <property type="project" value="UniProtKB"/>
</dbReference>
<dbReference type="GO" id="GO:0007292">
    <property type="term" value="P:female gamete generation"/>
    <property type="evidence" value="ECO:0000250"/>
    <property type="project" value="UniProtKB"/>
</dbReference>
<dbReference type="GO" id="GO:0051308">
    <property type="term" value="P:male meiosis chromosome separation"/>
    <property type="evidence" value="ECO:0000250"/>
    <property type="project" value="UniProtKB"/>
</dbReference>
<dbReference type="GO" id="GO:0007127">
    <property type="term" value="P:meiosis I"/>
    <property type="evidence" value="ECO:0007669"/>
    <property type="project" value="InterPro"/>
</dbReference>
<dbReference type="GO" id="GO:0006396">
    <property type="term" value="P:RNA processing"/>
    <property type="evidence" value="ECO:0000303"/>
    <property type="project" value="UniProtKB"/>
</dbReference>
<dbReference type="GO" id="GO:0007283">
    <property type="term" value="P:spermatogenesis"/>
    <property type="evidence" value="ECO:0000315"/>
    <property type="project" value="UniProtKB"/>
</dbReference>
<dbReference type="InterPro" id="IPR033587">
    <property type="entry name" value="M1AP"/>
</dbReference>
<dbReference type="PANTHER" id="PTHR28642">
    <property type="entry name" value="MEIOSIS 1 ARREST PROTEIN"/>
    <property type="match status" value="1"/>
</dbReference>
<dbReference type="PANTHER" id="PTHR28642:SF1">
    <property type="entry name" value="MEIOSIS 1 ARREST PROTEIN"/>
    <property type="match status" value="1"/>
</dbReference>
<evidence type="ECO:0000250" key="1"/>
<evidence type="ECO:0000256" key="2">
    <source>
        <dbReference type="SAM" id="MobiDB-lite"/>
    </source>
</evidence>
<evidence type="ECO:0000269" key="3">
    <source>
    </source>
</evidence>
<evidence type="ECO:0000269" key="4">
    <source>
    </source>
</evidence>
<evidence type="ECO:0000303" key="5">
    <source>
    </source>
</evidence>
<evidence type="ECO:0000303" key="6">
    <source>
    </source>
</evidence>
<evidence type="ECO:0000305" key="7"/>